<evidence type="ECO:0000250" key="1">
    <source>
        <dbReference type="UniProtKB" id="P49166"/>
    </source>
</evidence>
<evidence type="ECO:0000250" key="2">
    <source>
        <dbReference type="UniProtKB" id="P61927"/>
    </source>
</evidence>
<evidence type="ECO:0000255" key="3"/>
<evidence type="ECO:0000305" key="4"/>
<gene>
    <name type="primary">RPL37</name>
</gene>
<keyword id="KW-0007">Acetylation</keyword>
<keyword id="KW-0963">Cytoplasm</keyword>
<keyword id="KW-0479">Metal-binding</keyword>
<keyword id="KW-0597">Phosphoprotein</keyword>
<keyword id="KW-1185">Reference proteome</keyword>
<keyword id="KW-0687">Ribonucleoprotein</keyword>
<keyword id="KW-0689">Ribosomal protein</keyword>
<keyword id="KW-0694">RNA-binding</keyword>
<keyword id="KW-0699">rRNA-binding</keyword>
<keyword id="KW-0862">Zinc</keyword>
<keyword id="KW-0863">Zinc-finger</keyword>
<reference key="1">
    <citation type="submission" date="2007-06" db="EMBL/GenBank/DDBJ databases">
        <authorList>
            <consortium name="NIH - Mammalian Gene Collection (MGC) project"/>
        </authorList>
    </citation>
    <scope>NUCLEOTIDE SEQUENCE [LARGE SCALE MRNA]</scope>
    <source>
        <strain>Crossbred X Angus</strain>
        <tissue>Ileum</tissue>
    </source>
</reference>
<reference key="2">
    <citation type="journal article" date="1995" name="Eur. J. Biochem.">
        <title>Cell cycle, differentiation and tissue-independent expression of ribosomal protein L37.</title>
        <authorList>
            <person name="Su S."/>
            <person name="Bird R.C."/>
        </authorList>
    </citation>
    <scope>NUCLEOTIDE SEQUENCE [MRNA] OF 1-93</scope>
</reference>
<sequence>MTKGTSSFGKRRNKTHTLCRRCGSKAYHLQKSTCGKCGYPAKRKRKYNWSAKAKRRNTTGTGRMRHLKIVYRRFRHGFREGTTPKPKRAAVAASSSS</sequence>
<name>RL37_BOVIN</name>
<comment type="function">
    <text evidence="2">Component of the large ribosomal subunit. The ribosome is a large ribonucleoprotein complex responsible for the synthesis of proteins in the cell.</text>
</comment>
<comment type="subunit">
    <text evidence="2">Component of the large ribosomal subunit.</text>
</comment>
<comment type="subcellular location">
    <subcellularLocation>
        <location evidence="2">Cytoplasm</location>
    </subcellularLocation>
</comment>
<comment type="similarity">
    <text evidence="4">Belongs to the eukaryotic ribosomal protein eL37 family.</text>
</comment>
<protein>
    <recommendedName>
        <fullName evidence="4">Large ribosomal subunit protein eL37</fullName>
    </recommendedName>
    <alternativeName>
        <fullName>60S ribosomal protein L37</fullName>
    </alternativeName>
</protein>
<organism>
    <name type="scientific">Bos taurus</name>
    <name type="common">Bovine</name>
    <dbReference type="NCBI Taxonomy" id="9913"/>
    <lineage>
        <taxon>Eukaryota</taxon>
        <taxon>Metazoa</taxon>
        <taxon>Chordata</taxon>
        <taxon>Craniata</taxon>
        <taxon>Vertebrata</taxon>
        <taxon>Euteleostomi</taxon>
        <taxon>Mammalia</taxon>
        <taxon>Eutheria</taxon>
        <taxon>Laurasiatheria</taxon>
        <taxon>Artiodactyla</taxon>
        <taxon>Ruminantia</taxon>
        <taxon>Pecora</taxon>
        <taxon>Bovidae</taxon>
        <taxon>Bovinae</taxon>
        <taxon>Bos</taxon>
    </lineage>
</organism>
<dbReference type="EMBL" id="BC102179">
    <property type="protein sequence ID" value="AAI02180.1"/>
    <property type="molecule type" value="mRNA"/>
</dbReference>
<dbReference type="EMBL" id="BC148017">
    <property type="protein sequence ID" value="AAI48018.1"/>
    <property type="molecule type" value="mRNA"/>
</dbReference>
<dbReference type="EMBL" id="S79980">
    <property type="protein sequence ID" value="AAD14319.1"/>
    <property type="molecule type" value="mRNA"/>
</dbReference>
<dbReference type="RefSeq" id="NP_001071600.1">
    <property type="nucleotide sequence ID" value="NM_001078132.2"/>
</dbReference>
<dbReference type="SMR" id="P79244"/>
<dbReference type="FunCoup" id="P79244">
    <property type="interactions" value="837"/>
</dbReference>
<dbReference type="STRING" id="9913.ENSBTAP00000006781"/>
<dbReference type="PaxDb" id="9913-ENSBTAP00000006781"/>
<dbReference type="GeneID" id="768317"/>
<dbReference type="KEGG" id="bta:768317"/>
<dbReference type="CTD" id="6167"/>
<dbReference type="VEuPathDB" id="HostDB:ENSBTAG00000005142"/>
<dbReference type="eggNOG" id="KOG3475">
    <property type="taxonomic scope" value="Eukaryota"/>
</dbReference>
<dbReference type="HOGENOM" id="CLU_150908_0_0_1"/>
<dbReference type="InParanoid" id="P79244"/>
<dbReference type="OMA" id="RMAYLKH"/>
<dbReference type="OrthoDB" id="10259236at2759"/>
<dbReference type="TreeFam" id="TF300260"/>
<dbReference type="Reactome" id="R-BTA-156827">
    <property type="pathway name" value="L13a-mediated translational silencing of Ceruloplasmin expression"/>
</dbReference>
<dbReference type="Reactome" id="R-BTA-1799339">
    <property type="pathway name" value="SRP-dependent cotranslational protein targeting to membrane"/>
</dbReference>
<dbReference type="Reactome" id="R-BTA-6791226">
    <property type="pathway name" value="Major pathway of rRNA processing in the nucleolus and cytosol"/>
</dbReference>
<dbReference type="Reactome" id="R-BTA-72689">
    <property type="pathway name" value="Formation of a pool of free 40S subunits"/>
</dbReference>
<dbReference type="Reactome" id="R-BTA-72706">
    <property type="pathway name" value="GTP hydrolysis and joining of the 60S ribosomal subunit"/>
</dbReference>
<dbReference type="Reactome" id="R-BTA-975956">
    <property type="pathway name" value="Nonsense Mediated Decay (NMD) independent of the Exon Junction Complex (EJC)"/>
</dbReference>
<dbReference type="Reactome" id="R-BTA-975957">
    <property type="pathway name" value="Nonsense Mediated Decay (NMD) enhanced by the Exon Junction Complex (EJC)"/>
</dbReference>
<dbReference type="Proteomes" id="UP000009136">
    <property type="component" value="Chromosome 20"/>
</dbReference>
<dbReference type="Bgee" id="ENSBTAG00000005142">
    <property type="expression patterns" value="Expressed in retropharyngeal lymph node and 104 other cell types or tissues"/>
</dbReference>
<dbReference type="GO" id="GO:0022625">
    <property type="term" value="C:cytosolic large ribosomal subunit"/>
    <property type="evidence" value="ECO:0000318"/>
    <property type="project" value="GO_Central"/>
</dbReference>
<dbReference type="GO" id="GO:0045202">
    <property type="term" value="C:synapse"/>
    <property type="evidence" value="ECO:0007669"/>
    <property type="project" value="Ensembl"/>
</dbReference>
<dbReference type="GO" id="GO:0003723">
    <property type="term" value="F:RNA binding"/>
    <property type="evidence" value="ECO:0000318"/>
    <property type="project" value="GO_Central"/>
</dbReference>
<dbReference type="GO" id="GO:0019843">
    <property type="term" value="F:rRNA binding"/>
    <property type="evidence" value="ECO:0007669"/>
    <property type="project" value="UniProtKB-KW"/>
</dbReference>
<dbReference type="GO" id="GO:0003735">
    <property type="term" value="F:structural constituent of ribosome"/>
    <property type="evidence" value="ECO:0007669"/>
    <property type="project" value="Ensembl"/>
</dbReference>
<dbReference type="GO" id="GO:0008270">
    <property type="term" value="F:zinc ion binding"/>
    <property type="evidence" value="ECO:0007669"/>
    <property type="project" value="UniProtKB-KW"/>
</dbReference>
<dbReference type="GO" id="GO:0006412">
    <property type="term" value="P:translation"/>
    <property type="evidence" value="ECO:0007669"/>
    <property type="project" value="InterPro"/>
</dbReference>
<dbReference type="FunFam" id="2.20.25.30:FF:000001">
    <property type="entry name" value="Ribosomal protein L37"/>
    <property type="match status" value="1"/>
</dbReference>
<dbReference type="Gene3D" id="2.20.25.30">
    <property type="match status" value="1"/>
</dbReference>
<dbReference type="HAMAP" id="MF_00547">
    <property type="entry name" value="Ribosomal_eL37"/>
    <property type="match status" value="1"/>
</dbReference>
<dbReference type="InterPro" id="IPR001569">
    <property type="entry name" value="Ribosomal_eL37"/>
</dbReference>
<dbReference type="InterPro" id="IPR011331">
    <property type="entry name" value="Ribosomal_eL37/eL43"/>
</dbReference>
<dbReference type="InterPro" id="IPR018267">
    <property type="entry name" value="Ribosomal_eL37_CS"/>
</dbReference>
<dbReference type="InterPro" id="IPR011332">
    <property type="entry name" value="Ribosomal_zn-bd"/>
</dbReference>
<dbReference type="PANTHER" id="PTHR10768">
    <property type="entry name" value="60S RIBOSOMAL PROTEIN L37"/>
    <property type="match status" value="1"/>
</dbReference>
<dbReference type="PANTHER" id="PTHR10768:SF22">
    <property type="entry name" value="LARGE RIBOSOMAL SUBUNIT PROTEIN EL37"/>
    <property type="match status" value="1"/>
</dbReference>
<dbReference type="Pfam" id="PF01907">
    <property type="entry name" value="Ribosomal_L37e"/>
    <property type="match status" value="1"/>
</dbReference>
<dbReference type="SUPFAM" id="SSF57829">
    <property type="entry name" value="Zn-binding ribosomal proteins"/>
    <property type="match status" value="1"/>
</dbReference>
<dbReference type="PROSITE" id="PS01077">
    <property type="entry name" value="RIBOSOMAL_L37E"/>
    <property type="match status" value="1"/>
</dbReference>
<accession>P79244</accession>
<accession>A6QLM5</accession>
<accession>Q3T109</accession>
<feature type="chain" id="PRO_0000139704" description="Large ribosomal subunit protein eL37">
    <location>
        <begin position="1"/>
        <end position="97"/>
    </location>
</feature>
<feature type="zinc finger region" description="C4-type" evidence="3">
    <location>
        <begin position="19"/>
        <end position="37"/>
    </location>
</feature>
<feature type="binding site" evidence="1">
    <location>
        <position position="19"/>
    </location>
    <ligand>
        <name>Zn(2+)</name>
        <dbReference type="ChEBI" id="CHEBI:29105"/>
    </ligand>
</feature>
<feature type="binding site" evidence="1">
    <location>
        <position position="22"/>
    </location>
    <ligand>
        <name>Zn(2+)</name>
        <dbReference type="ChEBI" id="CHEBI:29105"/>
    </ligand>
</feature>
<feature type="binding site" evidence="1">
    <location>
        <position position="34"/>
    </location>
    <ligand>
        <name>Zn(2+)</name>
        <dbReference type="ChEBI" id="CHEBI:29105"/>
    </ligand>
</feature>
<feature type="binding site" evidence="1">
    <location>
        <position position="37"/>
    </location>
    <ligand>
        <name>Zn(2+)</name>
        <dbReference type="ChEBI" id="CHEBI:29105"/>
    </ligand>
</feature>
<feature type="modified residue" description="N6-acetyllysine" evidence="2">
    <location>
        <position position="10"/>
    </location>
</feature>
<feature type="modified residue" description="Phosphoserine" evidence="2">
    <location>
        <position position="96"/>
    </location>
</feature>
<feature type="modified residue" description="Phosphoserine" evidence="2">
    <location>
        <position position="97"/>
    </location>
</feature>
<feature type="sequence conflict" description="In Ref. 2; AAD14319." evidence="4" ref="2">
    <original>H</original>
    <variation>D</variation>
    <location>
        <position position="16"/>
    </location>
</feature>
<proteinExistence type="inferred from homology"/>